<dbReference type="EC" id="7.6.2.2" evidence="1"/>
<dbReference type="EC" id="7.6.2.3" evidence="1"/>
<dbReference type="EMBL" id="X80937">
    <property type="protein sequence ID" value="CAA56912.1"/>
    <property type="molecule type" value="mRNA"/>
</dbReference>
<dbReference type="EMBL" id="BC075732">
    <property type="protein sequence ID" value="AAH75732.1"/>
    <property type="molecule type" value="mRNA"/>
</dbReference>
<dbReference type="EMBL" id="BC067073">
    <property type="protein sequence ID" value="AAH67073.1"/>
    <property type="molecule type" value="mRNA"/>
</dbReference>
<dbReference type="EMBL" id="BC076636">
    <property type="protein sequence ID" value="AAH76636.1"/>
    <property type="molecule type" value="mRNA"/>
</dbReference>
<dbReference type="EMBL" id="AK019116">
    <property type="protein sequence ID" value="BAB31552.1"/>
    <property type="molecule type" value="mRNA"/>
</dbReference>
<dbReference type="CCDS" id="CCDS37678.1"/>
<dbReference type="RefSeq" id="NP_001185878.1">
    <property type="nucleotide sequence ID" value="NM_001198949.1"/>
</dbReference>
<dbReference type="RefSeq" id="NP_033093.2">
    <property type="nucleotide sequence ID" value="NM_009067.5"/>
</dbReference>
<dbReference type="SMR" id="Q62172"/>
<dbReference type="BioGRID" id="202895">
    <property type="interactions" value="33"/>
</dbReference>
<dbReference type="CORUM" id="Q62172"/>
<dbReference type="DIP" id="DIP-29741N"/>
<dbReference type="FunCoup" id="Q62172">
    <property type="interactions" value="2986"/>
</dbReference>
<dbReference type="IntAct" id="Q62172">
    <property type="interactions" value="4"/>
</dbReference>
<dbReference type="MINT" id="Q62172"/>
<dbReference type="STRING" id="10090.ENSMUSP00000024905"/>
<dbReference type="BindingDB" id="Q62172"/>
<dbReference type="ChEMBL" id="CHEMBL5169159"/>
<dbReference type="iPTMnet" id="Q62172"/>
<dbReference type="PhosphoSitePlus" id="Q62172"/>
<dbReference type="SwissPalm" id="Q62172"/>
<dbReference type="jPOST" id="Q62172"/>
<dbReference type="PaxDb" id="10090-ENSMUSP00000129448"/>
<dbReference type="ProteomicsDB" id="300277"/>
<dbReference type="Pumba" id="Q62172"/>
<dbReference type="Antibodypedia" id="21929">
    <property type="antibodies" value="527 antibodies from 37 providers"/>
</dbReference>
<dbReference type="DNASU" id="19765"/>
<dbReference type="Ensembl" id="ENSMUST00000024905.11">
    <property type="protein sequence ID" value="ENSMUSP00000024905.10"/>
    <property type="gene ID" value="ENSMUSG00000024096.18"/>
</dbReference>
<dbReference type="Ensembl" id="ENSMUST00000166543.10">
    <property type="protein sequence ID" value="ENSMUSP00000129448.3"/>
    <property type="gene ID" value="ENSMUSG00000024096.18"/>
</dbReference>
<dbReference type="GeneID" id="19765"/>
<dbReference type="KEGG" id="mmu:19765"/>
<dbReference type="UCSC" id="uc008dgn.3">
    <property type="organism name" value="mouse"/>
</dbReference>
<dbReference type="AGR" id="MGI:108466"/>
<dbReference type="CTD" id="10928"/>
<dbReference type="MGI" id="MGI:108466">
    <property type="gene designation" value="Ralbp1"/>
</dbReference>
<dbReference type="VEuPathDB" id="HostDB:ENSMUSG00000024096"/>
<dbReference type="eggNOG" id="KOG4370">
    <property type="taxonomic scope" value="Eukaryota"/>
</dbReference>
<dbReference type="GeneTree" id="ENSGT00940000154639"/>
<dbReference type="HOGENOM" id="CLU_028068_1_0_1"/>
<dbReference type="InParanoid" id="Q62172"/>
<dbReference type="OMA" id="LMHYKRL"/>
<dbReference type="OrthoDB" id="10033734at2759"/>
<dbReference type="PhylomeDB" id="Q62172"/>
<dbReference type="TreeFam" id="TF315411"/>
<dbReference type="Reactome" id="R-MMU-9013148">
    <property type="pathway name" value="CDC42 GTPase cycle"/>
</dbReference>
<dbReference type="Reactome" id="R-MMU-9013149">
    <property type="pathway name" value="RAC1 GTPase cycle"/>
</dbReference>
<dbReference type="BioGRID-ORCS" id="19765">
    <property type="hits" value="4 hits in 77 CRISPR screens"/>
</dbReference>
<dbReference type="ChiTaRS" id="Ralbp1">
    <property type="organism name" value="mouse"/>
</dbReference>
<dbReference type="PRO" id="PR:Q62172"/>
<dbReference type="Proteomes" id="UP000000589">
    <property type="component" value="Chromosome 17"/>
</dbReference>
<dbReference type="RNAct" id="Q62172">
    <property type="molecule type" value="protein"/>
</dbReference>
<dbReference type="Bgee" id="ENSMUSG00000024096">
    <property type="expression patterns" value="Expressed in animal zygote and 271 other cell types or tissues"/>
</dbReference>
<dbReference type="ExpressionAtlas" id="Q62172">
    <property type="expression patterns" value="baseline and differential"/>
</dbReference>
<dbReference type="GO" id="GO:0005829">
    <property type="term" value="C:cytosol"/>
    <property type="evidence" value="ECO:0007669"/>
    <property type="project" value="UniProtKB-SubCell"/>
</dbReference>
<dbReference type="GO" id="GO:0016020">
    <property type="term" value="C:membrane"/>
    <property type="evidence" value="ECO:0000250"/>
    <property type="project" value="UniProtKB"/>
</dbReference>
<dbReference type="GO" id="GO:0005739">
    <property type="term" value="C:mitochondrion"/>
    <property type="evidence" value="ECO:0000250"/>
    <property type="project" value="UniProtKB"/>
</dbReference>
<dbReference type="GO" id="GO:0016604">
    <property type="term" value="C:nuclear body"/>
    <property type="evidence" value="ECO:0007669"/>
    <property type="project" value="Ensembl"/>
</dbReference>
<dbReference type="GO" id="GO:0005886">
    <property type="term" value="C:plasma membrane"/>
    <property type="evidence" value="ECO:0007669"/>
    <property type="project" value="UniProtKB-SubCell"/>
</dbReference>
<dbReference type="GO" id="GO:0000922">
    <property type="term" value="C:spindle pole"/>
    <property type="evidence" value="ECO:0007669"/>
    <property type="project" value="UniProtKB-SubCell"/>
</dbReference>
<dbReference type="GO" id="GO:0015431">
    <property type="term" value="F:ABC-type glutathione S-conjugate transporter activity"/>
    <property type="evidence" value="ECO:0007669"/>
    <property type="project" value="UniProtKB-EC"/>
</dbReference>
<dbReference type="GO" id="GO:0008559">
    <property type="term" value="F:ABC-type xenobiotic transporter activity"/>
    <property type="evidence" value="ECO:0007669"/>
    <property type="project" value="UniProtKB-EC"/>
</dbReference>
<dbReference type="GO" id="GO:0005524">
    <property type="term" value="F:ATP binding"/>
    <property type="evidence" value="ECO:0007669"/>
    <property type="project" value="UniProtKB-KW"/>
</dbReference>
<dbReference type="GO" id="GO:0005096">
    <property type="term" value="F:GTPase activator activity"/>
    <property type="evidence" value="ECO:0000314"/>
    <property type="project" value="UniProtKB"/>
</dbReference>
<dbReference type="GO" id="GO:0031267">
    <property type="term" value="F:small GTPase binding"/>
    <property type="evidence" value="ECO:0000353"/>
    <property type="project" value="UniProtKB"/>
</dbReference>
<dbReference type="GO" id="GO:1900753">
    <property type="term" value="P:doxorubicin transport"/>
    <property type="evidence" value="ECO:0007669"/>
    <property type="project" value="Ensembl"/>
</dbReference>
<dbReference type="GO" id="GO:0043547">
    <property type="term" value="P:positive regulation of GTPase activity"/>
    <property type="evidence" value="ECO:0000314"/>
    <property type="project" value="UniProtKB"/>
</dbReference>
<dbReference type="GO" id="GO:0090141">
    <property type="term" value="P:positive regulation of mitochondrial fission"/>
    <property type="evidence" value="ECO:0000250"/>
    <property type="project" value="UniProtKB"/>
</dbReference>
<dbReference type="GO" id="GO:0001934">
    <property type="term" value="P:positive regulation of protein phosphorylation"/>
    <property type="evidence" value="ECO:0000250"/>
    <property type="project" value="UniProtKB"/>
</dbReference>
<dbReference type="GO" id="GO:0032489">
    <property type="term" value="P:regulation of Cdc42 protein signal transduction"/>
    <property type="evidence" value="ECO:0000250"/>
    <property type="project" value="UniProtKB"/>
</dbReference>
<dbReference type="GO" id="GO:0007264">
    <property type="term" value="P:small GTPase-mediated signal transduction"/>
    <property type="evidence" value="ECO:0007669"/>
    <property type="project" value="Ensembl"/>
</dbReference>
<dbReference type="GO" id="GO:1990961">
    <property type="term" value="P:xenobiotic detoxification by transmembrane export across the plasma membrane"/>
    <property type="evidence" value="ECO:0007669"/>
    <property type="project" value="Ensembl"/>
</dbReference>
<dbReference type="CDD" id="cd04381">
    <property type="entry name" value="RhoGap_RalBP1"/>
    <property type="match status" value="1"/>
</dbReference>
<dbReference type="FunFam" id="1.10.555.10:FF:000027">
    <property type="entry name" value="RalA-binding protein 1"/>
    <property type="match status" value="1"/>
</dbReference>
<dbReference type="FunFam" id="1.20.58.90:FF:000001">
    <property type="entry name" value="ralA-binding protein 1"/>
    <property type="match status" value="1"/>
</dbReference>
<dbReference type="Gene3D" id="1.20.58.90">
    <property type="match status" value="1"/>
</dbReference>
<dbReference type="Gene3D" id="1.10.555.10">
    <property type="entry name" value="Rho GTPase activation protein"/>
    <property type="match status" value="1"/>
</dbReference>
<dbReference type="InterPro" id="IPR039767">
    <property type="entry name" value="RALBP1"/>
</dbReference>
<dbReference type="InterPro" id="IPR049041">
    <property type="entry name" value="RalBP1-like_Ral-bd"/>
</dbReference>
<dbReference type="InterPro" id="IPR008936">
    <property type="entry name" value="Rho_GTPase_activation_prot"/>
</dbReference>
<dbReference type="InterPro" id="IPR000198">
    <property type="entry name" value="RhoGAP_dom"/>
</dbReference>
<dbReference type="PANTHER" id="PTHR12783">
    <property type="entry name" value="RALA BINDING PROTEIN 1 RALBP1"/>
    <property type="match status" value="1"/>
</dbReference>
<dbReference type="PANTHER" id="PTHR12783:SF5">
    <property type="entry name" value="RALA-BINDING PROTEIN 1"/>
    <property type="match status" value="1"/>
</dbReference>
<dbReference type="Pfam" id="PF00620">
    <property type="entry name" value="RhoGAP"/>
    <property type="match status" value="1"/>
</dbReference>
<dbReference type="Pfam" id="PF20924">
    <property type="entry name" value="RLIP76_Ral-bd"/>
    <property type="match status" value="1"/>
</dbReference>
<dbReference type="SMART" id="SM00324">
    <property type="entry name" value="RhoGAP"/>
    <property type="match status" value="1"/>
</dbReference>
<dbReference type="SUPFAM" id="SSF48350">
    <property type="entry name" value="GTPase activation domain, GAP"/>
    <property type="match status" value="1"/>
</dbReference>
<dbReference type="PROSITE" id="PS50238">
    <property type="entry name" value="RHOGAP"/>
    <property type="match status" value="1"/>
</dbReference>
<organism>
    <name type="scientific">Mus musculus</name>
    <name type="common">Mouse</name>
    <dbReference type="NCBI Taxonomy" id="10090"/>
    <lineage>
        <taxon>Eukaryota</taxon>
        <taxon>Metazoa</taxon>
        <taxon>Chordata</taxon>
        <taxon>Craniata</taxon>
        <taxon>Vertebrata</taxon>
        <taxon>Euteleostomi</taxon>
        <taxon>Mammalia</taxon>
        <taxon>Eutheria</taxon>
        <taxon>Euarchontoglires</taxon>
        <taxon>Glires</taxon>
        <taxon>Rodentia</taxon>
        <taxon>Myomorpha</taxon>
        <taxon>Muroidea</taxon>
        <taxon>Muridae</taxon>
        <taxon>Murinae</taxon>
        <taxon>Mus</taxon>
        <taxon>Mus</taxon>
    </lineage>
</organism>
<keyword id="KW-0007">Acetylation</keyword>
<keyword id="KW-0067">ATP-binding</keyword>
<keyword id="KW-1003">Cell membrane</keyword>
<keyword id="KW-0963">Cytoplasm</keyword>
<keyword id="KW-0206">Cytoskeleton</keyword>
<keyword id="KW-0343">GTPase activation</keyword>
<keyword id="KW-0472">Membrane</keyword>
<keyword id="KW-0496">Mitochondrion</keyword>
<keyword id="KW-0547">Nucleotide-binding</keyword>
<keyword id="KW-0539">Nucleus</keyword>
<keyword id="KW-0597">Phosphoprotein</keyword>
<keyword id="KW-1185">Reference proteome</keyword>
<keyword id="KW-1278">Translocase</keyword>
<keyword id="KW-0813">Transport</keyword>
<protein>
    <recommendedName>
        <fullName evidence="2">RalA-binding protein 1</fullName>
        <shortName evidence="2">RalBP1</shortName>
    </recommendedName>
    <alternativeName>
        <fullName evidence="1">Dinitrophenyl S-glutathione ATPase</fullName>
        <shortName evidence="1">DNP-SG ATPase</shortName>
        <ecNumber evidence="1">7.6.2.2</ecNumber>
        <ecNumber evidence="1">7.6.2.3</ecNumber>
    </alternativeName>
    <alternativeName>
        <fullName evidence="9">Ral-interacting protein 1</fullName>
    </alternativeName>
</protein>
<name>RBP1_MOUSE</name>
<accession>Q62172</accession>
<accession>Q6NXH5</accession>
<accession>Q9CRE5</accession>
<comment type="function">
    <text evidence="1 7">Multifunctional protein that functions as a downstream effector of RALA and RALB. As a GTPase-activating protein/GAP can inactivate CDC42 and RAC1 by stimulating their GTPase activity (PubMed:8570186). As part of the Ral signaling pathway, may also regulate ligand-dependent EGF and insulin receptors-mediated endocytosis. During mitosis, may act as a scaffold protein in the phosphorylation of EPSIN/EPN1 by the mitotic kinase cyclin B-CDK1, preventing endocytosis during that phase of the cell cycle. During mitosis, also controls mitochondrial fission as an effector of RALA. Recruited to mitochondrion by RALA, acts as a scaffold to foster the mitotic kinase cyclin B-CDK1-mediated phosphorylation and activation of DNM1L (By similarity).</text>
</comment>
<comment type="function">
    <text evidence="1">Could also function as a primary ATP-dependent active transporter for glutathione conjugates of electrophiles. May also actively catalyze the efflux of a wide range of substrates including xenobiotics like doxorubicin (DOX) contributing to cell multidrug resistance.</text>
</comment>
<comment type="catalytic activity">
    <reaction evidence="1">
        <text>an S-substituted glutathione(in) + ATP + H2O = an S-substituted glutathione(out) + ADP + phosphate + H(+)</text>
        <dbReference type="Rhea" id="RHEA:19121"/>
        <dbReference type="ChEBI" id="CHEBI:15377"/>
        <dbReference type="ChEBI" id="CHEBI:15378"/>
        <dbReference type="ChEBI" id="CHEBI:30616"/>
        <dbReference type="ChEBI" id="CHEBI:43474"/>
        <dbReference type="ChEBI" id="CHEBI:90779"/>
        <dbReference type="ChEBI" id="CHEBI:456216"/>
        <dbReference type="EC" id="7.6.2.3"/>
    </reaction>
    <physiologicalReaction direction="left-to-right" evidence="1">
        <dbReference type="Rhea" id="RHEA:19122"/>
    </physiologicalReaction>
</comment>
<comment type="catalytic activity">
    <reaction evidence="1">
        <text>ATP + H2O + xenobioticSide 1 = ADP + phosphate + xenobioticSide 2.</text>
        <dbReference type="EC" id="7.6.2.2"/>
    </reaction>
</comment>
<comment type="catalytic activity">
    <reaction evidence="1">
        <text>leukotriene C4(in) + ATP + H2O = leukotriene C4(out) + ADP + phosphate + H(+)</text>
        <dbReference type="Rhea" id="RHEA:38963"/>
        <dbReference type="ChEBI" id="CHEBI:15377"/>
        <dbReference type="ChEBI" id="CHEBI:15378"/>
        <dbReference type="ChEBI" id="CHEBI:30616"/>
        <dbReference type="ChEBI" id="CHEBI:43474"/>
        <dbReference type="ChEBI" id="CHEBI:57973"/>
        <dbReference type="ChEBI" id="CHEBI:456216"/>
    </reaction>
    <physiologicalReaction direction="left-to-right" evidence="1">
        <dbReference type="Rhea" id="RHEA:38964"/>
    </physiologicalReaction>
</comment>
<comment type="subunit">
    <text evidence="1 6 8">Interacts with the GTP-bound form of RALA (via effector domain); during mitosis, recruits RALBP1 to the mitochondrion where it promotes DNM1L phosphorylation and mitochondrial fission. Interacts with DNM1L; mediates its mitotic kinase cyclin B-CDK1-mediated phosphorylation during mitosis to promote mitochondrial fission. Interacts with the mitotic kinase cyclin B-CDK1 during mitosis. Interacts with the GTP-bound form of RALB (via effector domain) (By similarity). Interacts with REPS1; the interaction is direct and does not affect RALA-binding nor GTPase activator activity of RALBP1 (PubMed:9395447). Interacts with REPS2; the interaction is direct and does not affect RALA-binding nor GTPase activator activity of RALBP1 (By similarity). Interacts with EPN1, NUMB and TFAP2A during interphase and mitosis. Interacts with AP2M1; as part of the AP2 complex (PubMed:10910768). Interacts with CDC42. Interacts with RAC1 (By similarity).</text>
</comment>
<comment type="interaction">
    <interactant intactId="EBI-8392197">
        <id>Q62172</id>
    </interactant>
    <interactant intactId="EBI-9826498">
        <id>Q06A28</id>
        <label>RIR1</label>
    </interactant>
    <organismsDiffer>true</organismsDiffer>
    <experiments>2</experiments>
</comment>
<comment type="subcellular location">
    <subcellularLocation>
        <location evidence="1">Cell membrane</location>
        <topology evidence="1">Peripheral membrane protein</topology>
    </subcellularLocation>
    <subcellularLocation>
        <location evidence="1">Cytoplasm</location>
        <location evidence="1">Cytosol</location>
    </subcellularLocation>
    <subcellularLocation>
        <location evidence="2">Cytoplasm</location>
        <location evidence="2">Cytoskeleton</location>
        <location evidence="2">Spindle pole</location>
    </subcellularLocation>
    <subcellularLocation>
        <location evidence="1">Nucleus</location>
    </subcellularLocation>
    <subcellularLocation>
        <location evidence="1">Mitochondrion</location>
    </subcellularLocation>
    <text evidence="1 2 3">Cytosolic protein that transiently associates with the mitotic spindle poles in early prophase, and dissociates from them after completion of mitosis (By similarity). Targeted to the plasma membrane through its interaction with RALB, directed by FGF signaling. Docking on the membrane is required to transduce the Ral signal (By similarity). Recruited by RALA to the mitochondrion during mitosis where it regulates mitochondrial fission. Nuclear localization is cell cycle dependent while membrane localization is seen in adherent cells. The region involved in membrane association could form transmembrane domains and expose a part of the protein extracellularly (By similarity).</text>
</comment>
<comment type="tissue specificity">
    <text evidence="7">Ubiquitous. The highest level of expression was observed in ovaries and skeletal muscle, whereas the lowest was found in spleen, liver and peripheral blood leukocytes.</text>
</comment>
<comment type="domain">
    <text evidence="2">The Rho-GAP domain mediates the GTPase activator activity toward CDC42.</text>
</comment>
<comment type="PTM">
    <text evidence="11">Tyrosine-phosphorylated upon stimulation of cells with EGF.</text>
</comment>
<comment type="PTM">
    <text evidence="1">May undergo proteolytic cleavage to give peptides which reassemble to form a transporter complex.</text>
</comment>
<sequence length="648" mass="75043">MTECFLPPSSSPSEHRRAEHGSGLTRTPSSEEISPTKFPGLYRTGEPSPPHDVLHEPPDTVSDDDKDHGKKKGKFKKKEKRTEGYAAFQEDSSGDEAESPSKVKRSKGIHVFKKPSFSKKKEKDFKIKEKPKEEKHKEEKHKEEKHKEKKSKDLTAADVVKQWKEKKKKKKPIQEPEVPQMDAPSVKPIFGVPLVDAVERTMMYDGVRLPAVFRECVDYMEKHGMKCEGVYRVSGIKSKVDELKAAYDREESPNLEEYEPNTVASLLKQYLRDLPENLLTKELMPRFEEACGKTTEMEKVQEFQRLLRELPECNHLLLSWLIVHLDHVIAKELETKMNIQNISIVLSPTVQISNRVLYVLFTHVQELFGTVVLKQVTRPLRWSNMATMPTLPETQAGIKEEIRRQEFLLNCLHRDLQGGIKDLSKEERLWEVQRILTALKRKLREAKRQECETKIAQEIASLSKEDVSKEEMNENEEVINILLAQENEILTEQEELLAMEQFLRRQIASEKEEIDRLRAEIAEIQSRQQHGRSETEEYSSDSESESEDEEELQLILEDLQRQNEELEIKNNHLNQAVHEEREAIIELRVQLRLLQMQRAKSEQQPQEEEEPERRGGIGPPPCDGVLEVRVAKEQAKASPSKDRKETPI</sequence>
<reference key="1">
    <citation type="journal article" date="1995" name="Oncogene">
        <title>A putative effector of Ral has homology to Rho/Rac GTPase activating proteins.</title>
        <authorList>
            <person name="Park S.-H."/>
            <person name="Weinberg R.A."/>
        </authorList>
    </citation>
    <scope>NUCLEOTIDE SEQUENCE [MRNA]</scope>
    <scope>FUNCTION</scope>
    <scope>TISSUE SPECIFICITY</scope>
    <source>
        <strain>NIH Swiss</strain>
        <tissue>Embryo</tissue>
    </source>
</reference>
<reference key="2">
    <citation type="journal article" date="2004" name="Genome Res.">
        <title>The status, quality, and expansion of the NIH full-length cDNA project: the Mammalian Gene Collection (MGC).</title>
        <authorList>
            <consortium name="The MGC Project Team"/>
        </authorList>
    </citation>
    <scope>NUCLEOTIDE SEQUENCE [LARGE SCALE MRNA]</scope>
    <source>
        <strain>C57BL/6J</strain>
        <tissue>Eye</tissue>
        <tissue>Head</tissue>
        <tissue>Limb</tissue>
    </source>
</reference>
<reference key="3">
    <citation type="journal article" date="2005" name="Science">
        <title>The transcriptional landscape of the mammalian genome.</title>
        <authorList>
            <person name="Carninci P."/>
            <person name="Kasukawa T."/>
            <person name="Katayama S."/>
            <person name="Gough J."/>
            <person name="Frith M.C."/>
            <person name="Maeda N."/>
            <person name="Oyama R."/>
            <person name="Ravasi T."/>
            <person name="Lenhard B."/>
            <person name="Wells C."/>
            <person name="Kodzius R."/>
            <person name="Shimokawa K."/>
            <person name="Bajic V.B."/>
            <person name="Brenner S.E."/>
            <person name="Batalov S."/>
            <person name="Forrest A.R."/>
            <person name="Zavolan M."/>
            <person name="Davis M.J."/>
            <person name="Wilming L.G."/>
            <person name="Aidinis V."/>
            <person name="Allen J.E."/>
            <person name="Ambesi-Impiombato A."/>
            <person name="Apweiler R."/>
            <person name="Aturaliya R.N."/>
            <person name="Bailey T.L."/>
            <person name="Bansal M."/>
            <person name="Baxter L."/>
            <person name="Beisel K.W."/>
            <person name="Bersano T."/>
            <person name="Bono H."/>
            <person name="Chalk A.M."/>
            <person name="Chiu K.P."/>
            <person name="Choudhary V."/>
            <person name="Christoffels A."/>
            <person name="Clutterbuck D.R."/>
            <person name="Crowe M.L."/>
            <person name="Dalla E."/>
            <person name="Dalrymple B.P."/>
            <person name="de Bono B."/>
            <person name="Della Gatta G."/>
            <person name="di Bernardo D."/>
            <person name="Down T."/>
            <person name="Engstrom P."/>
            <person name="Fagiolini M."/>
            <person name="Faulkner G."/>
            <person name="Fletcher C.F."/>
            <person name="Fukushima T."/>
            <person name="Furuno M."/>
            <person name="Futaki S."/>
            <person name="Gariboldi M."/>
            <person name="Georgii-Hemming P."/>
            <person name="Gingeras T.R."/>
            <person name="Gojobori T."/>
            <person name="Green R.E."/>
            <person name="Gustincich S."/>
            <person name="Harbers M."/>
            <person name="Hayashi Y."/>
            <person name="Hensch T.K."/>
            <person name="Hirokawa N."/>
            <person name="Hill D."/>
            <person name="Huminiecki L."/>
            <person name="Iacono M."/>
            <person name="Ikeo K."/>
            <person name="Iwama A."/>
            <person name="Ishikawa T."/>
            <person name="Jakt M."/>
            <person name="Kanapin A."/>
            <person name="Katoh M."/>
            <person name="Kawasawa Y."/>
            <person name="Kelso J."/>
            <person name="Kitamura H."/>
            <person name="Kitano H."/>
            <person name="Kollias G."/>
            <person name="Krishnan S.P."/>
            <person name="Kruger A."/>
            <person name="Kummerfeld S.K."/>
            <person name="Kurochkin I.V."/>
            <person name="Lareau L.F."/>
            <person name="Lazarevic D."/>
            <person name="Lipovich L."/>
            <person name="Liu J."/>
            <person name="Liuni S."/>
            <person name="McWilliam S."/>
            <person name="Madan Babu M."/>
            <person name="Madera M."/>
            <person name="Marchionni L."/>
            <person name="Matsuda H."/>
            <person name="Matsuzawa S."/>
            <person name="Miki H."/>
            <person name="Mignone F."/>
            <person name="Miyake S."/>
            <person name="Morris K."/>
            <person name="Mottagui-Tabar S."/>
            <person name="Mulder N."/>
            <person name="Nakano N."/>
            <person name="Nakauchi H."/>
            <person name="Ng P."/>
            <person name="Nilsson R."/>
            <person name="Nishiguchi S."/>
            <person name="Nishikawa S."/>
            <person name="Nori F."/>
            <person name="Ohara O."/>
            <person name="Okazaki Y."/>
            <person name="Orlando V."/>
            <person name="Pang K.C."/>
            <person name="Pavan W.J."/>
            <person name="Pavesi G."/>
            <person name="Pesole G."/>
            <person name="Petrovsky N."/>
            <person name="Piazza S."/>
            <person name="Reed J."/>
            <person name="Reid J.F."/>
            <person name="Ring B.Z."/>
            <person name="Ringwald M."/>
            <person name="Rost B."/>
            <person name="Ruan Y."/>
            <person name="Salzberg S.L."/>
            <person name="Sandelin A."/>
            <person name="Schneider C."/>
            <person name="Schoenbach C."/>
            <person name="Sekiguchi K."/>
            <person name="Semple C.A."/>
            <person name="Seno S."/>
            <person name="Sessa L."/>
            <person name="Sheng Y."/>
            <person name="Shibata Y."/>
            <person name="Shimada H."/>
            <person name="Shimada K."/>
            <person name="Silva D."/>
            <person name="Sinclair B."/>
            <person name="Sperling S."/>
            <person name="Stupka E."/>
            <person name="Sugiura K."/>
            <person name="Sultana R."/>
            <person name="Takenaka Y."/>
            <person name="Taki K."/>
            <person name="Tammoja K."/>
            <person name="Tan S.L."/>
            <person name="Tang S."/>
            <person name="Taylor M.S."/>
            <person name="Tegner J."/>
            <person name="Teichmann S.A."/>
            <person name="Ueda H.R."/>
            <person name="van Nimwegen E."/>
            <person name="Verardo R."/>
            <person name="Wei C.L."/>
            <person name="Yagi K."/>
            <person name="Yamanishi H."/>
            <person name="Zabarovsky E."/>
            <person name="Zhu S."/>
            <person name="Zimmer A."/>
            <person name="Hide W."/>
            <person name="Bult C."/>
            <person name="Grimmond S.M."/>
            <person name="Teasdale R.D."/>
            <person name="Liu E.T."/>
            <person name="Brusic V."/>
            <person name="Quackenbush J."/>
            <person name="Wahlestedt C."/>
            <person name="Mattick J.S."/>
            <person name="Hume D.A."/>
            <person name="Kai C."/>
            <person name="Sasaki D."/>
            <person name="Tomaru Y."/>
            <person name="Fukuda S."/>
            <person name="Kanamori-Katayama M."/>
            <person name="Suzuki M."/>
            <person name="Aoki J."/>
            <person name="Arakawa T."/>
            <person name="Iida J."/>
            <person name="Imamura K."/>
            <person name="Itoh M."/>
            <person name="Kato T."/>
            <person name="Kawaji H."/>
            <person name="Kawagashira N."/>
            <person name="Kawashima T."/>
            <person name="Kojima M."/>
            <person name="Kondo S."/>
            <person name="Konno H."/>
            <person name="Nakano K."/>
            <person name="Ninomiya N."/>
            <person name="Nishio T."/>
            <person name="Okada M."/>
            <person name="Plessy C."/>
            <person name="Shibata K."/>
            <person name="Shiraki T."/>
            <person name="Suzuki S."/>
            <person name="Tagami M."/>
            <person name="Waki K."/>
            <person name="Watahiki A."/>
            <person name="Okamura-Oho Y."/>
            <person name="Suzuki H."/>
            <person name="Kawai J."/>
            <person name="Hayashizaki Y."/>
        </authorList>
    </citation>
    <scope>NUCLEOTIDE SEQUENCE [LARGE SCALE MRNA] OF 1-136</scope>
    <source>
        <strain>C57BL/6J</strain>
        <tissue>Embryonic stem cell</tissue>
    </source>
</reference>
<reference key="4">
    <citation type="journal article" date="1997" name="J. Biol. Chem.">
        <title>An eps homology (EH) domain protein that binds to the ral-GTPase target, RalBP1.</title>
        <authorList>
            <person name="Yamaguchi A."/>
            <person name="Urano T."/>
            <person name="Goi T."/>
            <person name="Feig L.A."/>
        </authorList>
    </citation>
    <scope>INTERACTION WITH REPS1</scope>
    <scope>PHOSPHORYLATION</scope>
    <source>
        <tissue>Muscle</tissue>
    </source>
</reference>
<reference key="5">
    <citation type="journal article" date="2000" name="J. Cell Sci.">
        <title>RLIP76, an effector of the GTPase Ral, interacts with the AP2 complex: involvement of the Ral pathway in receptor endocytosis.</title>
        <authorList>
            <person name="Jullien-Flores V."/>
            <person name="Mahe Y."/>
            <person name="Mirey G."/>
            <person name="Leprince C."/>
            <person name="Meunier-Bisceuil B."/>
            <person name="Sorkin A."/>
            <person name="Camonis J.H."/>
        </authorList>
    </citation>
    <scope>INTERACTION WITH AP2M1</scope>
</reference>
<reference key="6">
    <citation type="journal article" date="2007" name="Proc. Natl. Acad. Sci. U.S.A.">
        <title>Large-scale phosphorylation analysis of mouse liver.</title>
        <authorList>
            <person name="Villen J."/>
            <person name="Beausoleil S.A."/>
            <person name="Gerber S.A."/>
            <person name="Gygi S.P."/>
        </authorList>
    </citation>
    <scope>PHOSPHORYLATION [LARGE SCALE ANALYSIS] AT SER-92 AND SER-93</scope>
    <scope>IDENTIFICATION BY MASS SPECTROMETRY [LARGE SCALE ANALYSIS]</scope>
    <source>
        <tissue>Liver</tissue>
    </source>
</reference>
<reference key="7">
    <citation type="journal article" date="2009" name="Immunity">
        <title>The phagosomal proteome in interferon-gamma-activated macrophages.</title>
        <authorList>
            <person name="Trost M."/>
            <person name="English L."/>
            <person name="Lemieux S."/>
            <person name="Courcelles M."/>
            <person name="Desjardins M."/>
            <person name="Thibault P."/>
        </authorList>
    </citation>
    <scope>IDENTIFICATION BY MASS SPECTROMETRY [LARGE SCALE ANALYSIS]</scope>
</reference>
<reference key="8">
    <citation type="journal article" date="2009" name="Mol. Cell. Proteomics">
        <title>Large scale localization of protein phosphorylation by use of electron capture dissociation mass spectrometry.</title>
        <authorList>
            <person name="Sweet S.M."/>
            <person name="Bailey C.M."/>
            <person name="Cunningham D.L."/>
            <person name="Heath J.K."/>
            <person name="Cooper H.J."/>
        </authorList>
    </citation>
    <scope>PHOSPHORYLATION [LARGE SCALE ANALYSIS] AT SER-29</scope>
    <scope>IDENTIFICATION BY MASS SPECTROMETRY [LARGE SCALE ANALYSIS]</scope>
    <source>
        <tissue>Embryonic fibroblast</tissue>
    </source>
</reference>
<reference key="9">
    <citation type="journal article" date="2010" name="Cell">
        <title>A tissue-specific atlas of mouse protein phosphorylation and expression.</title>
        <authorList>
            <person name="Huttlin E.L."/>
            <person name="Jedrychowski M.P."/>
            <person name="Elias J.E."/>
            <person name="Goswami T."/>
            <person name="Rad R."/>
            <person name="Beausoleil S.A."/>
            <person name="Villen J."/>
            <person name="Haas W."/>
            <person name="Sowa M.E."/>
            <person name="Gygi S.P."/>
        </authorList>
    </citation>
    <scope>PHOSPHORYLATION [LARGE SCALE ANALYSIS] AT SER-29; SER-30; SER-48; SER-92 AND SER-93</scope>
    <scope>IDENTIFICATION BY MASS SPECTROMETRY [LARGE SCALE ANALYSIS]</scope>
    <source>
        <tissue>Brain</tissue>
        <tissue>Brown adipose tissue</tissue>
        <tissue>Heart</tissue>
        <tissue>Kidney</tissue>
        <tissue>Liver</tissue>
        <tissue>Lung</tissue>
        <tissue>Pancreas</tissue>
        <tissue>Spleen</tissue>
        <tissue>Testis</tissue>
    </source>
</reference>
<evidence type="ECO:0000250" key="1">
    <source>
        <dbReference type="UniProtKB" id="Q15311"/>
    </source>
</evidence>
<evidence type="ECO:0000250" key="2">
    <source>
        <dbReference type="UniProtKB" id="Q62796"/>
    </source>
</evidence>
<evidence type="ECO:0000250" key="3">
    <source>
        <dbReference type="UniProtKB" id="Q9PT60"/>
    </source>
</evidence>
<evidence type="ECO:0000255" key="4">
    <source>
        <dbReference type="PROSITE-ProRule" id="PRU00172"/>
    </source>
</evidence>
<evidence type="ECO:0000256" key="5">
    <source>
        <dbReference type="SAM" id="MobiDB-lite"/>
    </source>
</evidence>
<evidence type="ECO:0000269" key="6">
    <source>
    </source>
</evidence>
<evidence type="ECO:0000269" key="7">
    <source>
    </source>
</evidence>
<evidence type="ECO:0000269" key="8">
    <source>
    </source>
</evidence>
<evidence type="ECO:0000303" key="9">
    <source>
    </source>
</evidence>
<evidence type="ECO:0000305" key="10"/>
<evidence type="ECO:0000305" key="11">
    <source>
    </source>
</evidence>
<evidence type="ECO:0000312" key="12">
    <source>
        <dbReference type="MGI" id="MGI:108466"/>
    </source>
</evidence>
<evidence type="ECO:0007744" key="13">
    <source>
    </source>
</evidence>
<evidence type="ECO:0007744" key="14">
    <source>
    </source>
</evidence>
<evidence type="ECO:0007744" key="15">
    <source>
    </source>
</evidence>
<proteinExistence type="evidence at protein level"/>
<gene>
    <name evidence="12" type="primary">Ralbp1</name>
    <name evidence="9" type="synonym">Rip1</name>
</gene>
<feature type="initiator methionine" description="Removed" evidence="1">
    <location>
        <position position="1"/>
    </location>
</feature>
<feature type="chain" id="PRO_0000056734" description="RalA-binding protein 1">
    <location>
        <begin position="2"/>
        <end position="648"/>
    </location>
</feature>
<feature type="domain" description="Rho-GAP" evidence="4">
    <location>
        <begin position="192"/>
        <end position="380"/>
    </location>
</feature>
<feature type="region of interest" description="Disordered" evidence="5">
    <location>
        <begin position="1"/>
        <end position="158"/>
    </location>
</feature>
<feature type="region of interest" description="Nuclear localization signal" evidence="3">
    <location>
        <begin position="102"/>
        <end position="119"/>
    </location>
</feature>
<feature type="region of interest" description="Mediates association with membranes and could form transmembrane domains" evidence="1">
    <location>
        <begin position="154"/>
        <end position="219"/>
    </location>
</feature>
<feature type="region of interest" description="Mediates interaction with RALA and RALB" evidence="1">
    <location>
        <begin position="403"/>
        <end position="499"/>
    </location>
</feature>
<feature type="region of interest" description="Mediates interaction with REPS1 and REPS2" evidence="2">
    <location>
        <begin position="500"/>
        <end position="648"/>
    </location>
</feature>
<feature type="region of interest" description="Disordered" evidence="5">
    <location>
        <begin position="525"/>
        <end position="552"/>
    </location>
</feature>
<feature type="region of interest" description="Disordered" evidence="5">
    <location>
        <begin position="598"/>
        <end position="648"/>
    </location>
</feature>
<feature type="compositionally biased region" description="Polar residues" evidence="5">
    <location>
        <begin position="24"/>
        <end position="33"/>
    </location>
</feature>
<feature type="compositionally biased region" description="Basic and acidic residues" evidence="5">
    <location>
        <begin position="52"/>
        <end position="68"/>
    </location>
</feature>
<feature type="compositionally biased region" description="Basic residues" evidence="5">
    <location>
        <begin position="69"/>
        <end position="79"/>
    </location>
</feature>
<feature type="compositionally biased region" description="Basic residues" evidence="5">
    <location>
        <begin position="102"/>
        <end position="118"/>
    </location>
</feature>
<feature type="compositionally biased region" description="Basic and acidic residues" evidence="5">
    <location>
        <begin position="119"/>
        <end position="155"/>
    </location>
</feature>
<feature type="compositionally biased region" description="Acidic residues" evidence="5">
    <location>
        <begin position="536"/>
        <end position="552"/>
    </location>
</feature>
<feature type="compositionally biased region" description="Basic and acidic residues" evidence="5">
    <location>
        <begin position="629"/>
        <end position="648"/>
    </location>
</feature>
<feature type="binding site" evidence="1">
    <location>
        <begin position="69"/>
        <end position="74"/>
    </location>
    <ligand>
        <name>ATP</name>
        <dbReference type="ChEBI" id="CHEBI:30616"/>
    </ligand>
</feature>
<feature type="binding site" evidence="1">
    <location>
        <begin position="418"/>
        <end position="425"/>
    </location>
    <ligand>
        <name>ATP</name>
        <dbReference type="ChEBI" id="CHEBI:30616"/>
    </ligand>
</feature>
<feature type="site" description="Arginine finger; crucial for GTP hydrolysis by stabilizing the transition state" evidence="4">
    <location>
        <position position="232"/>
    </location>
</feature>
<feature type="modified residue" description="N-acetylthreonine" evidence="1">
    <location>
        <position position="2"/>
    </location>
</feature>
<feature type="modified residue" description="Phosphoserine" evidence="14 15">
    <location>
        <position position="29"/>
    </location>
</feature>
<feature type="modified residue" description="Phosphoserine" evidence="15">
    <location>
        <position position="30"/>
    </location>
</feature>
<feature type="modified residue" description="Phosphoserine" evidence="1">
    <location>
        <position position="34"/>
    </location>
</feature>
<feature type="modified residue" description="Phosphothreonine" evidence="1">
    <location>
        <position position="44"/>
    </location>
</feature>
<feature type="modified residue" description="Phosphoserine" evidence="15">
    <location>
        <position position="48"/>
    </location>
</feature>
<feature type="modified residue" description="Phosphoserine" evidence="1">
    <location>
        <position position="62"/>
    </location>
</feature>
<feature type="modified residue" description="Phosphoserine" evidence="13 15">
    <location>
        <position position="92"/>
    </location>
</feature>
<feature type="modified residue" description="Phosphoserine" evidence="13 15">
    <location>
        <position position="93"/>
    </location>
</feature>
<feature type="modified residue" description="Phosphoserine" evidence="1">
    <location>
        <position position="461"/>
    </location>
</feature>
<feature type="modified residue" description="Phosphoserine" evidence="1">
    <location>
        <position position="463"/>
    </location>
</feature>
<feature type="modified residue" description="Phosphoserine" evidence="1">
    <location>
        <position position="638"/>
    </location>
</feature>
<feature type="sequence conflict" description="In Ref. 3; BAB31552." evidence="10" ref="3">
    <original>S</original>
    <variation>F</variation>
    <location>
        <position position="30"/>
    </location>
</feature>
<feature type="sequence conflict" description="In Ref. 1; CAA56912 and 2; AAH75732." evidence="10" ref="1 2">
    <original>I</original>
    <variation>T</variation>
    <location>
        <position position="617"/>
    </location>
</feature>